<comment type="subunit">
    <text evidence="1">Interacts with the 40S ribosomal subunit.</text>
</comment>
<comment type="subcellular location">
    <subcellularLocation>
        <location evidence="1">Cytoplasm</location>
    </subcellularLocation>
</comment>
<comment type="domain">
    <text>The SUI1 domain may be involved in RNA binding.</text>
</comment>
<comment type="similarity">
    <text evidence="4">Belongs to the DENR family.</text>
</comment>
<keyword id="KW-0963">Cytoplasm</keyword>
<keyword id="KW-1185">Reference proteome</keyword>
<keyword id="KW-0687">Ribonucleoprotein</keyword>
<keyword id="KW-0689">Ribosomal protein</keyword>
<evidence type="ECO:0000250" key="1"/>
<evidence type="ECO:0000255" key="2">
    <source>
        <dbReference type="PROSITE-ProRule" id="PRU00200"/>
    </source>
</evidence>
<evidence type="ECO:0000256" key="3">
    <source>
        <dbReference type="SAM" id="MobiDB-lite"/>
    </source>
</evidence>
<evidence type="ECO:0000305" key="4"/>
<gene>
    <name type="primary">TMA22</name>
    <name type="ORF">PICST_59087</name>
</gene>
<proteinExistence type="inferred from homology"/>
<protein>
    <recommendedName>
        <fullName>Translation machinery-associated protein 22</fullName>
    </recommendedName>
</protein>
<dbReference type="EMBL" id="CP000498">
    <property type="protein sequence ID" value="ABN66313.1"/>
    <property type="molecule type" value="Genomic_DNA"/>
</dbReference>
<dbReference type="RefSeq" id="XP_001384342.1">
    <property type="nucleotide sequence ID" value="XM_001384305.1"/>
</dbReference>
<dbReference type="SMR" id="A3LSY0"/>
<dbReference type="FunCoup" id="A3LSY0">
    <property type="interactions" value="1239"/>
</dbReference>
<dbReference type="STRING" id="322104.A3LSY0"/>
<dbReference type="GeneID" id="4838639"/>
<dbReference type="KEGG" id="pic:PICST_59087"/>
<dbReference type="eggNOG" id="KOG3239">
    <property type="taxonomic scope" value="Eukaryota"/>
</dbReference>
<dbReference type="HOGENOM" id="CLU_073511_0_1_1"/>
<dbReference type="InParanoid" id="A3LSY0"/>
<dbReference type="OMA" id="EVFEIDM"/>
<dbReference type="OrthoDB" id="277199at2759"/>
<dbReference type="Proteomes" id="UP000002258">
    <property type="component" value="Chromosome 4"/>
</dbReference>
<dbReference type="GO" id="GO:0005737">
    <property type="term" value="C:cytoplasm"/>
    <property type="evidence" value="ECO:0007669"/>
    <property type="project" value="UniProtKB-SubCell"/>
</dbReference>
<dbReference type="GO" id="GO:1990904">
    <property type="term" value="C:ribonucleoprotein complex"/>
    <property type="evidence" value="ECO:0007669"/>
    <property type="project" value="UniProtKB-KW"/>
</dbReference>
<dbReference type="GO" id="GO:0005840">
    <property type="term" value="C:ribosome"/>
    <property type="evidence" value="ECO:0007669"/>
    <property type="project" value="UniProtKB-KW"/>
</dbReference>
<dbReference type="GO" id="GO:0003729">
    <property type="term" value="F:mRNA binding"/>
    <property type="evidence" value="ECO:0007669"/>
    <property type="project" value="TreeGrafter"/>
</dbReference>
<dbReference type="GO" id="GO:0003743">
    <property type="term" value="F:translation initiation factor activity"/>
    <property type="evidence" value="ECO:0007669"/>
    <property type="project" value="InterPro"/>
</dbReference>
<dbReference type="GO" id="GO:0001731">
    <property type="term" value="P:formation of translation preinitiation complex"/>
    <property type="evidence" value="ECO:0007669"/>
    <property type="project" value="TreeGrafter"/>
</dbReference>
<dbReference type="GO" id="GO:0002188">
    <property type="term" value="P:translation reinitiation"/>
    <property type="evidence" value="ECO:0007669"/>
    <property type="project" value="TreeGrafter"/>
</dbReference>
<dbReference type="CDD" id="cd11607">
    <property type="entry name" value="DENR_C"/>
    <property type="match status" value="1"/>
</dbReference>
<dbReference type="Gene3D" id="3.30.780.10">
    <property type="entry name" value="SUI1-like domain"/>
    <property type="match status" value="1"/>
</dbReference>
<dbReference type="InterPro" id="IPR050318">
    <property type="entry name" value="DENR/SUI1_TIF"/>
</dbReference>
<dbReference type="InterPro" id="IPR046447">
    <property type="entry name" value="DENR_C"/>
</dbReference>
<dbReference type="InterPro" id="IPR005873">
    <property type="entry name" value="DENR_eukaryotes"/>
</dbReference>
<dbReference type="InterPro" id="IPR048517">
    <property type="entry name" value="DENR_N"/>
</dbReference>
<dbReference type="InterPro" id="IPR001950">
    <property type="entry name" value="SUI1"/>
</dbReference>
<dbReference type="InterPro" id="IPR036877">
    <property type="entry name" value="SUI1_dom_sf"/>
</dbReference>
<dbReference type="NCBIfam" id="TIGR01159">
    <property type="entry name" value="DRP1"/>
    <property type="match status" value="1"/>
</dbReference>
<dbReference type="PANTHER" id="PTHR12789:SF0">
    <property type="entry name" value="DENSITY-REGULATED PROTEIN"/>
    <property type="match status" value="1"/>
</dbReference>
<dbReference type="PANTHER" id="PTHR12789">
    <property type="entry name" value="DENSITY-REGULATED PROTEIN HOMOLOG"/>
    <property type="match status" value="1"/>
</dbReference>
<dbReference type="Pfam" id="PF21023">
    <property type="entry name" value="DENR_N"/>
    <property type="match status" value="1"/>
</dbReference>
<dbReference type="Pfam" id="PF01253">
    <property type="entry name" value="SUI1"/>
    <property type="match status" value="1"/>
</dbReference>
<dbReference type="SUPFAM" id="SSF55159">
    <property type="entry name" value="eIF1-like"/>
    <property type="match status" value="1"/>
</dbReference>
<dbReference type="PROSITE" id="PS50296">
    <property type="entry name" value="SUI1"/>
    <property type="match status" value="1"/>
</dbReference>
<feature type="chain" id="PRO_0000320449" description="Translation machinery-associated protein 22">
    <location>
        <begin position="1"/>
        <end position="195"/>
    </location>
</feature>
<feature type="domain" description="SUI1" evidence="2">
    <location>
        <begin position="94"/>
        <end position="165"/>
    </location>
</feature>
<feature type="region of interest" description="Disordered" evidence="3">
    <location>
        <begin position="176"/>
        <end position="195"/>
    </location>
</feature>
<sequence length="195" mass="22108">MTEVVAREVYYCGVCSFPPEYCEFGVSLKRCKDWLQDNNQELFDKIYSDDALATQTSTLSIERQEKISQELAKKQLKEEAKQERELQKKLASKVLIKRIERNRRKHIISISGLEVFNIDMKKLAKTFASKFATGASVTKTADKKEEILVQGDVSDEAKEYIEKLLEEQGLNGVEVEQVDEKKKKKATAPGATPAA</sequence>
<accession>A3LSY0</accession>
<name>DENR_PICST</name>
<organism>
    <name type="scientific">Scheffersomyces stipitis (strain ATCC 58785 / CBS 6054 / NBRC 10063 / NRRL Y-11545)</name>
    <name type="common">Yeast</name>
    <name type="synonym">Pichia stipitis</name>
    <dbReference type="NCBI Taxonomy" id="322104"/>
    <lineage>
        <taxon>Eukaryota</taxon>
        <taxon>Fungi</taxon>
        <taxon>Dikarya</taxon>
        <taxon>Ascomycota</taxon>
        <taxon>Saccharomycotina</taxon>
        <taxon>Pichiomycetes</taxon>
        <taxon>Debaryomycetaceae</taxon>
        <taxon>Scheffersomyces</taxon>
    </lineage>
</organism>
<reference key="1">
    <citation type="journal article" date="2007" name="Nat. Biotechnol.">
        <title>Genome sequence of the lignocellulose-bioconverting and xylose-fermenting yeast Pichia stipitis.</title>
        <authorList>
            <person name="Jeffries T.W."/>
            <person name="Grigoriev I.V."/>
            <person name="Grimwood J."/>
            <person name="Laplaza J.M."/>
            <person name="Aerts A."/>
            <person name="Salamov A."/>
            <person name="Schmutz J."/>
            <person name="Lindquist E."/>
            <person name="Dehal P."/>
            <person name="Shapiro H."/>
            <person name="Jin Y.-S."/>
            <person name="Passoth V."/>
            <person name="Richardson P.M."/>
        </authorList>
    </citation>
    <scope>NUCLEOTIDE SEQUENCE [LARGE SCALE GENOMIC DNA]</scope>
    <source>
        <strain>ATCC 58785 / CBS 6054 / NBRC 10063 / NRRL Y-11545</strain>
    </source>
</reference>